<name>ATN1_PHYPA</name>
<reference evidence="16" key="1">
    <citation type="journal article" date="2003" name="Plant J.">
        <title>Molecular cloning and characterization of a sodium-pump ATPase of the moss Physcomitrella patens.</title>
        <authorList>
            <person name="Benito B."/>
            <person name="Rodriguez-Navarro A."/>
        </authorList>
    </citation>
    <scope>NUCLEOTIDE SEQUENCE [MRNA]</scope>
    <scope>FUNCTION</scope>
    <scope>CATALYTIC ACTIVITY</scope>
</reference>
<reference evidence="15" key="2">
    <citation type="journal article" date="2007" name="Plant Physiol.">
        <title>Exclusion of Na+ via sodium ATPase (PpENA1) ensures normal growth of Physcomitrella patens under moderate salt stress.</title>
        <authorList>
            <person name="Lunde C."/>
            <person name="Drew D.P."/>
            <person name="Jacobs A.K."/>
            <person name="Tester M."/>
        </authorList>
    </citation>
    <scope>NUCLEOTIDE SEQUENCE [GENOMIC DNA]</scope>
    <scope>FUNCTION</scope>
    <scope>DEVELOPMENTAL STAGE</scope>
    <scope>INDUCTION</scope>
    <scope>DISRUPTION PHENOTYPE</scope>
</reference>
<reference evidence="18" key="3">
    <citation type="journal article" date="2008" name="Science">
        <title>The Physcomitrella genome reveals evolutionary insights into the conquest of land by plants.</title>
        <authorList>
            <person name="Rensing S.A."/>
            <person name="Lang D."/>
            <person name="Zimmer A.D."/>
            <person name="Terry A."/>
            <person name="Salamov A."/>
            <person name="Shapiro H."/>
            <person name="Nishiyama T."/>
            <person name="Perroud P.-F."/>
            <person name="Lindquist E.A."/>
            <person name="Kamisugi Y."/>
            <person name="Tanahashi T."/>
            <person name="Sakakibara K."/>
            <person name="Fujita T."/>
            <person name="Oishi K."/>
            <person name="Shin-I T."/>
            <person name="Kuroki Y."/>
            <person name="Toyoda A."/>
            <person name="Suzuki Y."/>
            <person name="Hashimoto S.-I."/>
            <person name="Yamaguchi K."/>
            <person name="Sugano S."/>
            <person name="Kohara Y."/>
            <person name="Fujiyama A."/>
            <person name="Anterola A."/>
            <person name="Aoki S."/>
            <person name="Ashton N."/>
            <person name="Barbazuk W.B."/>
            <person name="Barker E."/>
            <person name="Bennetzen J.L."/>
            <person name="Blankenship R."/>
            <person name="Cho S.H."/>
            <person name="Dutcher S.K."/>
            <person name="Estelle M."/>
            <person name="Fawcett J.A."/>
            <person name="Gundlach H."/>
            <person name="Hanada K."/>
            <person name="Heyl A."/>
            <person name="Hicks K.A."/>
            <person name="Hughes J."/>
            <person name="Lohr M."/>
            <person name="Mayer K."/>
            <person name="Melkozernov A."/>
            <person name="Murata T."/>
            <person name="Nelson D.R."/>
            <person name="Pils B."/>
            <person name="Prigge M."/>
            <person name="Reiss B."/>
            <person name="Renner T."/>
            <person name="Rombauts S."/>
            <person name="Rushton P.J."/>
            <person name="Sanderfoot A."/>
            <person name="Schween G."/>
            <person name="Shiu S.-H."/>
            <person name="Stueber K."/>
            <person name="Theodoulou F.L."/>
            <person name="Tu H."/>
            <person name="Van de Peer Y."/>
            <person name="Verrier P.J."/>
            <person name="Waters E."/>
            <person name="Wood A."/>
            <person name="Yang L."/>
            <person name="Cove D."/>
            <person name="Cuming A.C."/>
            <person name="Hasebe M."/>
            <person name="Lucas S."/>
            <person name="Mishler B.D."/>
            <person name="Reski R."/>
            <person name="Grigoriev I.V."/>
            <person name="Quatrano R.S."/>
            <person name="Boore J.L."/>
        </authorList>
    </citation>
    <scope>NUCLEOTIDE SEQUENCE [LARGE SCALE GENOMIC DNA]</scope>
    <source>
        <strain evidence="18">cv. Gransden 2004</strain>
    </source>
</reference>
<reference evidence="18" key="4">
    <citation type="journal article" date="2018" name="Plant J.">
        <title>The Physcomitrella patens chromosome-scale assembly reveals moss genome structure and evolution.</title>
        <authorList>
            <person name="Lang D."/>
            <person name="Ullrich K.K."/>
            <person name="Murat F."/>
            <person name="Fuchs J."/>
            <person name="Jenkins J."/>
            <person name="Haas F.B."/>
            <person name="Piednoel M."/>
            <person name="Gundlach H."/>
            <person name="Van Bel M."/>
            <person name="Meyberg R."/>
            <person name="Vives C."/>
            <person name="Morata J."/>
            <person name="Symeonidi A."/>
            <person name="Hiss M."/>
            <person name="Muchero W."/>
            <person name="Kamisugi Y."/>
            <person name="Saleh O."/>
            <person name="Blanc G."/>
            <person name="Decker E.L."/>
            <person name="van Gessel N."/>
            <person name="Grimwood J."/>
            <person name="Hayes R.D."/>
            <person name="Graham S.W."/>
            <person name="Gunter L.E."/>
            <person name="McDaniel S.F."/>
            <person name="Hoernstein S.N.W."/>
            <person name="Larsson A."/>
            <person name="Li F.W."/>
            <person name="Perroud P.F."/>
            <person name="Phillips J."/>
            <person name="Ranjan P."/>
            <person name="Rokshar D.S."/>
            <person name="Rothfels C.J."/>
            <person name="Schneider L."/>
            <person name="Shu S."/>
            <person name="Stevenson D.W."/>
            <person name="Thummler F."/>
            <person name="Tillich M."/>
            <person name="Villarreal Aguilar J.C."/>
            <person name="Widiez T."/>
            <person name="Wong G.K."/>
            <person name="Wymore A."/>
            <person name="Zhang Y."/>
            <person name="Zimmer A.D."/>
            <person name="Quatrano R.S."/>
            <person name="Mayer K.F.X."/>
            <person name="Goodstein D."/>
            <person name="Casacuberta J.M."/>
            <person name="Vandepoele K."/>
            <person name="Reski R."/>
            <person name="Cuming A.C."/>
            <person name="Tuskan G.A."/>
            <person name="Maumus F."/>
            <person name="Salse J."/>
            <person name="Schmutz J."/>
            <person name="Rensing S.A."/>
        </authorList>
    </citation>
    <scope>NUCLEOTIDE SEQUENCE [LARGE SCALE GENOMIC DNA]</scope>
    <scope>GENOME REANNOTATION</scope>
    <source>
        <strain evidence="18">cv. Gransden 2004</strain>
    </source>
</reference>
<reference evidence="11" key="5">
    <citation type="journal article" date="2009" name="Plant Mol. Biol.">
        <title>Role of ENA ATPase in Na(+) efflux at high pH in bryophytes.</title>
        <authorList>
            <person name="Fraile-Escanciano A."/>
            <person name="Garciadeblas B."/>
            <person name="Rodriguez-Navarro A."/>
            <person name="Benito B."/>
        </authorList>
    </citation>
    <scope>FUNCTION</scope>
    <scope>CATALYTIC ACTIVITY</scope>
    <scope>SUBCELLULAR LOCATION</scope>
    <scope>INDUCTION</scope>
    <scope>DISRUPTION PHENOTYPE</scope>
</reference>
<reference evidence="11" key="6">
    <citation type="journal article" date="2011" name="Biochim. Biophys. Acta">
        <title>Structural and functional analyses of PpENA1 provide insights into cation binding by type IID P-type ATPases in lower plants and fungi.</title>
        <authorList>
            <person name="Drew D.P."/>
            <person name="Hrmova M."/>
            <person name="Lunde C."/>
            <person name="Jacobs A.K."/>
            <person name="Tester M."/>
            <person name="Fincher G.B."/>
        </authorList>
    </citation>
    <scope>FUNCTION</scope>
    <scope>CATALYTIC ACTIVITY</scope>
    <scope>MUTAGENESIS OF GLU-298; ASP-340 AND ASN-741</scope>
</reference>
<dbReference type="EC" id="7.2.2.3" evidence="12 13 14"/>
<dbReference type="EMBL" id="AJ564254">
    <property type="protein sequence ID" value="CAD91917.1"/>
    <property type="molecule type" value="mRNA"/>
</dbReference>
<dbReference type="EMBL" id="EF683141">
    <property type="protein sequence ID" value="ABU25347.1"/>
    <property type="molecule type" value="Genomic_DNA"/>
</dbReference>
<dbReference type="EMBL" id="ABEU02000020">
    <property type="protein sequence ID" value="PNR33409.1"/>
    <property type="molecule type" value="Genomic_DNA"/>
</dbReference>
<dbReference type="RefSeq" id="XP_001760095.1">
    <property type="nucleotide sequence ID" value="XM_001760043.1"/>
</dbReference>
<dbReference type="SMR" id="Q7XB51"/>
<dbReference type="STRING" id="3218.Q7XB51"/>
<dbReference type="PaxDb" id="3218-PP1S40_228V6.1"/>
<dbReference type="EnsemblPlants" id="Pp3c20_19940V3.1">
    <property type="protein sequence ID" value="PAC:32945752.CDS.1"/>
    <property type="gene ID" value="Pp3c20_19940"/>
</dbReference>
<dbReference type="EnsemblPlants" id="Pp3c20_19940V3.2">
    <property type="protein sequence ID" value="PAC:32945753.CDS.1"/>
    <property type="gene ID" value="Pp3c20_19940"/>
</dbReference>
<dbReference type="Gramene" id="Pp3c20_19940V3.1">
    <property type="protein sequence ID" value="PAC:32945752.CDS.1"/>
    <property type="gene ID" value="Pp3c20_19940"/>
</dbReference>
<dbReference type="Gramene" id="Pp3c20_19940V3.2">
    <property type="protein sequence ID" value="PAC:32945753.CDS.1"/>
    <property type="gene ID" value="Pp3c20_19940"/>
</dbReference>
<dbReference type="eggNOG" id="KOG0202">
    <property type="taxonomic scope" value="Eukaryota"/>
</dbReference>
<dbReference type="HOGENOM" id="CLU_002360_3_3_1"/>
<dbReference type="InParanoid" id="Q7XB51"/>
<dbReference type="OrthoDB" id="1869525at2759"/>
<dbReference type="Proteomes" id="UP000006727">
    <property type="component" value="Chromosome 20"/>
</dbReference>
<dbReference type="GO" id="GO:0005886">
    <property type="term" value="C:plasma membrane"/>
    <property type="evidence" value="ECO:0000314"/>
    <property type="project" value="UniProtKB"/>
</dbReference>
<dbReference type="GO" id="GO:0005524">
    <property type="term" value="F:ATP binding"/>
    <property type="evidence" value="ECO:0007669"/>
    <property type="project" value="UniProtKB-KW"/>
</dbReference>
<dbReference type="GO" id="GO:0016887">
    <property type="term" value="F:ATP hydrolysis activity"/>
    <property type="evidence" value="ECO:0007669"/>
    <property type="project" value="InterPro"/>
</dbReference>
<dbReference type="GO" id="GO:0046872">
    <property type="term" value="F:metal ion binding"/>
    <property type="evidence" value="ECO:0007669"/>
    <property type="project" value="UniProtKB-KW"/>
</dbReference>
<dbReference type="GO" id="GO:0005388">
    <property type="term" value="F:P-type calcium transporter activity"/>
    <property type="evidence" value="ECO:0007669"/>
    <property type="project" value="UniProtKB-EC"/>
</dbReference>
<dbReference type="GO" id="GO:0008556">
    <property type="term" value="F:P-type potassium transmembrane transporter activity"/>
    <property type="evidence" value="ECO:0000318"/>
    <property type="project" value="GO_Central"/>
</dbReference>
<dbReference type="GO" id="GO:0008554">
    <property type="term" value="F:P-type sodium transporter activity"/>
    <property type="evidence" value="ECO:0000314"/>
    <property type="project" value="UniProtKB"/>
</dbReference>
<dbReference type="GO" id="GO:0071475">
    <property type="term" value="P:cellular hyperosmotic salinity response"/>
    <property type="evidence" value="ECO:0000315"/>
    <property type="project" value="UniProtKB"/>
</dbReference>
<dbReference type="GO" id="GO:0006874">
    <property type="term" value="P:intracellular calcium ion homeostasis"/>
    <property type="evidence" value="ECO:0000318"/>
    <property type="project" value="GO_Central"/>
</dbReference>
<dbReference type="GO" id="GO:0034220">
    <property type="term" value="P:monoatomic ion transmembrane transport"/>
    <property type="evidence" value="ECO:0000318"/>
    <property type="project" value="GO_Central"/>
</dbReference>
<dbReference type="GO" id="GO:0006813">
    <property type="term" value="P:potassium ion transport"/>
    <property type="evidence" value="ECO:0000318"/>
    <property type="project" value="GO_Central"/>
</dbReference>
<dbReference type="GO" id="GO:0036376">
    <property type="term" value="P:sodium ion export across plasma membrane"/>
    <property type="evidence" value="ECO:0000314"/>
    <property type="project" value="UniProtKB"/>
</dbReference>
<dbReference type="GO" id="GO:0055078">
    <property type="term" value="P:sodium ion homeostasis"/>
    <property type="evidence" value="ECO:0000314"/>
    <property type="project" value="UniProtKB"/>
</dbReference>
<dbReference type="GO" id="GO:0006814">
    <property type="term" value="P:sodium ion transport"/>
    <property type="evidence" value="ECO:0000318"/>
    <property type="project" value="GO_Central"/>
</dbReference>
<dbReference type="FunFam" id="2.70.150.10:FF:000016">
    <property type="entry name" value="Calcium-transporting P-type ATPase putative"/>
    <property type="match status" value="1"/>
</dbReference>
<dbReference type="FunFam" id="3.40.50.1000:FF:000028">
    <property type="entry name" value="Calcium-transporting P-type ATPase, putative"/>
    <property type="match status" value="1"/>
</dbReference>
<dbReference type="Gene3D" id="3.40.1110.10">
    <property type="entry name" value="Calcium-transporting ATPase, cytoplasmic domain N"/>
    <property type="match status" value="1"/>
</dbReference>
<dbReference type="Gene3D" id="2.70.150.10">
    <property type="entry name" value="Calcium-transporting ATPase, cytoplasmic transduction domain A"/>
    <property type="match status" value="1"/>
</dbReference>
<dbReference type="Gene3D" id="1.20.1110.10">
    <property type="entry name" value="Calcium-transporting ATPase, transmembrane domain"/>
    <property type="match status" value="1"/>
</dbReference>
<dbReference type="Gene3D" id="3.40.50.1000">
    <property type="entry name" value="HAD superfamily/HAD-like"/>
    <property type="match status" value="1"/>
</dbReference>
<dbReference type="InterPro" id="IPR006068">
    <property type="entry name" value="ATPase_P-typ_cation-transptr_C"/>
</dbReference>
<dbReference type="InterPro" id="IPR004014">
    <property type="entry name" value="ATPase_P-typ_cation-transptr_N"/>
</dbReference>
<dbReference type="InterPro" id="IPR023299">
    <property type="entry name" value="ATPase_P-typ_cyto_dom_N"/>
</dbReference>
<dbReference type="InterPro" id="IPR018303">
    <property type="entry name" value="ATPase_P-typ_P_site"/>
</dbReference>
<dbReference type="InterPro" id="IPR023298">
    <property type="entry name" value="ATPase_P-typ_TM_dom_sf"/>
</dbReference>
<dbReference type="InterPro" id="IPR008250">
    <property type="entry name" value="ATPase_P-typ_transduc_dom_A_sf"/>
</dbReference>
<dbReference type="InterPro" id="IPR036412">
    <property type="entry name" value="HAD-like_sf"/>
</dbReference>
<dbReference type="InterPro" id="IPR023214">
    <property type="entry name" value="HAD_sf"/>
</dbReference>
<dbReference type="InterPro" id="IPR006414">
    <property type="entry name" value="P-type_ATPase_IID"/>
</dbReference>
<dbReference type="InterPro" id="IPR001757">
    <property type="entry name" value="P_typ_ATPase"/>
</dbReference>
<dbReference type="InterPro" id="IPR044492">
    <property type="entry name" value="P_typ_ATPase_HD_dom"/>
</dbReference>
<dbReference type="NCBIfam" id="TIGR01523">
    <property type="entry name" value="ATPase-IID_K-Na"/>
    <property type="match status" value="1"/>
</dbReference>
<dbReference type="NCBIfam" id="TIGR01494">
    <property type="entry name" value="ATPase_P-type"/>
    <property type="match status" value="2"/>
</dbReference>
<dbReference type="PANTHER" id="PTHR42861">
    <property type="entry name" value="CALCIUM-TRANSPORTING ATPASE"/>
    <property type="match status" value="1"/>
</dbReference>
<dbReference type="Pfam" id="PF13246">
    <property type="entry name" value="Cation_ATPase"/>
    <property type="match status" value="1"/>
</dbReference>
<dbReference type="Pfam" id="PF00689">
    <property type="entry name" value="Cation_ATPase_C"/>
    <property type="match status" value="1"/>
</dbReference>
<dbReference type="Pfam" id="PF00690">
    <property type="entry name" value="Cation_ATPase_N"/>
    <property type="match status" value="1"/>
</dbReference>
<dbReference type="Pfam" id="PF00122">
    <property type="entry name" value="E1-E2_ATPase"/>
    <property type="match status" value="1"/>
</dbReference>
<dbReference type="Pfam" id="PF00702">
    <property type="entry name" value="Hydrolase"/>
    <property type="match status" value="1"/>
</dbReference>
<dbReference type="PRINTS" id="PR00119">
    <property type="entry name" value="CATATPASE"/>
</dbReference>
<dbReference type="SFLD" id="SFLDG00002">
    <property type="entry name" value="C1.7:_P-type_atpase_like"/>
    <property type="match status" value="1"/>
</dbReference>
<dbReference type="SFLD" id="SFLDF00027">
    <property type="entry name" value="p-type_atpase"/>
    <property type="match status" value="1"/>
</dbReference>
<dbReference type="SMART" id="SM00831">
    <property type="entry name" value="Cation_ATPase_N"/>
    <property type="match status" value="1"/>
</dbReference>
<dbReference type="SUPFAM" id="SSF81653">
    <property type="entry name" value="Calcium ATPase, transduction domain A"/>
    <property type="match status" value="1"/>
</dbReference>
<dbReference type="SUPFAM" id="SSF81665">
    <property type="entry name" value="Calcium ATPase, transmembrane domain M"/>
    <property type="match status" value="1"/>
</dbReference>
<dbReference type="SUPFAM" id="SSF56784">
    <property type="entry name" value="HAD-like"/>
    <property type="match status" value="1"/>
</dbReference>
<dbReference type="SUPFAM" id="SSF81660">
    <property type="entry name" value="Metal cation-transporting ATPase, ATP-binding domain N"/>
    <property type="match status" value="1"/>
</dbReference>
<dbReference type="PROSITE" id="PS00154">
    <property type="entry name" value="ATPASE_E1_E2"/>
    <property type="match status" value="1"/>
</dbReference>
<keyword id="KW-0067">ATP-binding</keyword>
<keyword id="KW-1003">Cell membrane</keyword>
<keyword id="KW-0325">Glycoprotein</keyword>
<keyword id="KW-0406">Ion transport</keyword>
<keyword id="KW-0460">Magnesium</keyword>
<keyword id="KW-0472">Membrane</keyword>
<keyword id="KW-0479">Metal-binding</keyword>
<keyword id="KW-0547">Nucleotide-binding</keyword>
<keyword id="KW-0630">Potassium</keyword>
<keyword id="KW-0633">Potassium transport</keyword>
<keyword id="KW-1185">Reference proteome</keyword>
<keyword id="KW-0915">Sodium</keyword>
<keyword id="KW-0739">Sodium transport</keyword>
<keyword id="KW-1278">Translocase</keyword>
<keyword id="KW-0812">Transmembrane</keyword>
<keyword id="KW-1133">Transmembrane helix</keyword>
<keyword id="KW-0813">Transport</keyword>
<protein>
    <recommendedName>
        <fullName evidence="11">Sodium/potassium exporting P-type ATPase 1</fullName>
        <ecNumber evidence="12 13 14">7.2.2.3</ecNumber>
    </recommendedName>
    <alternativeName>
        <fullName evidence="10">PpENA1</fullName>
    </alternativeName>
</protein>
<proteinExistence type="evidence at protein level"/>
<evidence type="ECO:0000250" key="1">
    <source>
        <dbReference type="UniProtKB" id="O13398"/>
    </source>
</evidence>
<evidence type="ECO:0000250" key="2">
    <source>
        <dbReference type="UniProtKB" id="P04191"/>
    </source>
</evidence>
<evidence type="ECO:0000250" key="3">
    <source>
        <dbReference type="UniProtKB" id="P13587"/>
    </source>
</evidence>
<evidence type="ECO:0000255" key="4"/>
<evidence type="ECO:0000255" key="5">
    <source>
        <dbReference type="PROSITE-ProRule" id="PRU00498"/>
    </source>
</evidence>
<evidence type="ECO:0000269" key="6">
    <source>
    </source>
</evidence>
<evidence type="ECO:0000269" key="7">
    <source>
    </source>
</evidence>
<evidence type="ECO:0000269" key="8">
    <source>
    </source>
</evidence>
<evidence type="ECO:0000269" key="9">
    <source>
    </source>
</evidence>
<evidence type="ECO:0000303" key="10">
    <source>
    </source>
</evidence>
<evidence type="ECO:0000305" key="11"/>
<evidence type="ECO:0000305" key="12">
    <source>
    </source>
</evidence>
<evidence type="ECO:0000305" key="13">
    <source>
    </source>
</evidence>
<evidence type="ECO:0000305" key="14">
    <source>
    </source>
</evidence>
<evidence type="ECO:0000312" key="15">
    <source>
        <dbReference type="EMBL" id="ABU25347.1"/>
    </source>
</evidence>
<evidence type="ECO:0000312" key="16">
    <source>
        <dbReference type="EMBL" id="CAD91917.1"/>
    </source>
</evidence>
<evidence type="ECO:0000312" key="17">
    <source>
        <dbReference type="EMBL" id="PNR33409.1"/>
    </source>
</evidence>
<evidence type="ECO:0000312" key="18">
    <source>
        <dbReference type="Proteomes" id="UP000006727"/>
    </source>
</evidence>
<feature type="chain" id="PRO_0000458053" description="Sodium/potassium exporting P-type ATPase 1">
    <location>
        <begin position="1"/>
        <end position="967"/>
    </location>
</feature>
<feature type="topological domain" description="Cytoplasmic" evidence="11">
    <location>
        <begin position="1"/>
        <end position="70"/>
    </location>
</feature>
<feature type="transmembrane region" description="Helical" evidence="4">
    <location>
        <begin position="71"/>
        <end position="91"/>
    </location>
</feature>
<feature type="topological domain" description="Extracellular" evidence="11">
    <location>
        <position position="92"/>
    </location>
</feature>
<feature type="transmembrane region" description="Helical" evidence="4">
    <location>
        <begin position="93"/>
        <end position="113"/>
    </location>
</feature>
<feature type="topological domain" description="Cytoplasmic" evidence="11">
    <location>
        <begin position="114"/>
        <end position="254"/>
    </location>
</feature>
<feature type="transmembrane region" description="Helical" evidence="4">
    <location>
        <begin position="255"/>
        <end position="275"/>
    </location>
</feature>
<feature type="topological domain" description="Extracellular" evidence="11">
    <location>
        <begin position="276"/>
        <end position="283"/>
    </location>
</feature>
<feature type="transmembrane region" description="Helical" evidence="4">
    <location>
        <begin position="284"/>
        <end position="304"/>
    </location>
</feature>
<feature type="topological domain" description="Cytoplasmic" evidence="11">
    <location>
        <begin position="305"/>
        <end position="732"/>
    </location>
</feature>
<feature type="transmembrane region" description="Helical" evidence="4">
    <location>
        <begin position="733"/>
        <end position="753"/>
    </location>
</feature>
<feature type="topological domain" description="Extracellular" evidence="11">
    <location>
        <begin position="754"/>
        <end position="812"/>
    </location>
</feature>
<feature type="transmembrane region" description="Helical" evidence="4">
    <location>
        <begin position="813"/>
        <end position="833"/>
    </location>
</feature>
<feature type="topological domain" description="Cytoplasmic" evidence="11">
    <location>
        <begin position="834"/>
        <end position="900"/>
    </location>
</feature>
<feature type="transmembrane region" description="Helical" evidence="4">
    <location>
        <begin position="901"/>
        <end position="921"/>
    </location>
</feature>
<feature type="topological domain" description="Extracellular" evidence="11">
    <location>
        <begin position="922"/>
        <end position="931"/>
    </location>
</feature>
<feature type="transmembrane region" description="Helical" evidence="4">
    <location>
        <begin position="932"/>
        <end position="952"/>
    </location>
</feature>
<feature type="topological domain" description="Cytoplasmic" evidence="11">
    <location>
        <begin position="953"/>
        <end position="967"/>
    </location>
</feature>
<feature type="active site" description="4-aspartylphosphate intermediate" evidence="2">
    <location>
        <position position="340"/>
    </location>
</feature>
<feature type="binding site" evidence="2">
    <location>
        <position position="340"/>
    </location>
    <ligand>
        <name>Mg(2+)</name>
        <dbReference type="ChEBI" id="CHEBI:18420"/>
    </ligand>
</feature>
<feature type="binding site" evidence="2">
    <location>
        <position position="342"/>
    </location>
    <ligand>
        <name>ATP</name>
        <dbReference type="ChEBI" id="CHEBI:30616"/>
    </ligand>
</feature>
<feature type="binding site" evidence="2">
    <location>
        <position position="342"/>
    </location>
    <ligand>
        <name>Mg(2+)</name>
        <dbReference type="ChEBI" id="CHEBI:18420"/>
    </ligand>
</feature>
<feature type="binding site" evidence="2">
    <location>
        <position position="425"/>
    </location>
    <ligand>
        <name>ATP</name>
        <dbReference type="ChEBI" id="CHEBI:30616"/>
    </ligand>
</feature>
<feature type="binding site" evidence="2">
    <location>
        <position position="478"/>
    </location>
    <ligand>
        <name>ATP</name>
        <dbReference type="ChEBI" id="CHEBI:30616"/>
    </ligand>
</feature>
<feature type="binding site" evidence="2">
    <location>
        <position position="523"/>
    </location>
    <ligand>
        <name>ATP</name>
        <dbReference type="ChEBI" id="CHEBI:30616"/>
    </ligand>
</feature>
<feature type="binding site" evidence="2">
    <location>
        <position position="587"/>
    </location>
    <ligand>
        <name>ATP</name>
        <dbReference type="ChEBI" id="CHEBI:30616"/>
    </ligand>
</feature>
<feature type="binding site" evidence="2">
    <location>
        <position position="588"/>
    </location>
    <ligand>
        <name>ATP</name>
        <dbReference type="ChEBI" id="CHEBI:30616"/>
    </ligand>
</feature>
<feature type="binding site" evidence="2">
    <location>
        <position position="589"/>
    </location>
    <ligand>
        <name>ATP</name>
        <dbReference type="ChEBI" id="CHEBI:30616"/>
    </ligand>
</feature>
<feature type="binding site" evidence="2">
    <location>
        <position position="651"/>
    </location>
    <ligand>
        <name>ATP</name>
        <dbReference type="ChEBI" id="CHEBI:30616"/>
    </ligand>
</feature>
<feature type="binding site" evidence="2">
    <location>
        <position position="657"/>
    </location>
    <ligand>
        <name>ATP</name>
        <dbReference type="ChEBI" id="CHEBI:30616"/>
    </ligand>
</feature>
<feature type="binding site" evidence="2">
    <location>
        <position position="676"/>
    </location>
    <ligand>
        <name>Mg(2+)</name>
        <dbReference type="ChEBI" id="CHEBI:18420"/>
    </ligand>
</feature>
<feature type="binding site" evidence="2">
    <location>
        <position position="679"/>
    </location>
    <ligand>
        <name>ATP</name>
        <dbReference type="ChEBI" id="CHEBI:30616"/>
    </ligand>
</feature>
<feature type="glycosylation site" description="N-linked (GlcNAc...) asparagine" evidence="5">
    <location>
        <position position="279"/>
    </location>
</feature>
<feature type="mutagenesis site" description="Decreases activity." evidence="9">
    <original>E</original>
    <variation>S</variation>
    <location>
        <position position="298"/>
    </location>
</feature>
<feature type="mutagenesis site" description="Loss of activity." evidence="9">
    <original>D</original>
    <variation>A</variation>
    <location>
        <position position="340"/>
    </location>
</feature>
<feature type="mutagenesis site" description="Decreases activity." evidence="9">
    <original>N</original>
    <variation>A</variation>
    <location>
        <position position="741"/>
    </location>
</feature>
<accession>Q7XB51</accession>
<accession>A9S134</accession>
<accession>E1C9P6</accession>
<gene>
    <name evidence="10" type="primary">ENA1</name>
    <name evidence="17" type="ORF">PHYPA_025353</name>
</gene>
<comment type="function">
    <text evidence="3 6 7 8 9">Catalyzes the hydrolysis of ATP coupled with the export of sodium and potassium from the cell (PubMed:14617094, PubMed:17556514, PubMed:19757095, PubMed:21081109). May pump potassium inefficiently (PubMed:14617094, PubMed:19757095). May transport other cations such as lithium (By similarity). Sodium/potassium efflux ATPases are involved in salt tolerance and maintaining the membrane potential across the plasma membrane in high salinity (Na+) or alkaline (K+) environments (PubMed:14617094, PubMed:17556514, PubMed:19757095, PubMed:21081109).</text>
</comment>
<comment type="catalytic activity">
    <reaction evidence="12 13 14">
        <text>Na(+)(in) + ATP + H2O = Na(+)(out) + ADP + phosphate + H(+)</text>
        <dbReference type="Rhea" id="RHEA:14633"/>
        <dbReference type="ChEBI" id="CHEBI:15377"/>
        <dbReference type="ChEBI" id="CHEBI:15378"/>
        <dbReference type="ChEBI" id="CHEBI:29101"/>
        <dbReference type="ChEBI" id="CHEBI:30616"/>
        <dbReference type="ChEBI" id="CHEBI:43474"/>
        <dbReference type="ChEBI" id="CHEBI:456216"/>
        <dbReference type="EC" id="7.2.2.3"/>
    </reaction>
    <physiologicalReaction direction="left-to-right" evidence="12 14">
        <dbReference type="Rhea" id="RHEA:14634"/>
    </physiologicalReaction>
</comment>
<comment type="catalytic activity">
    <reaction evidence="1">
        <text>K(+)(in) + ATP + H2O = K(+)(out) + ADP + phosphate + H(+)</text>
        <dbReference type="Rhea" id="RHEA:75815"/>
        <dbReference type="ChEBI" id="CHEBI:15377"/>
        <dbReference type="ChEBI" id="CHEBI:15378"/>
        <dbReference type="ChEBI" id="CHEBI:29103"/>
        <dbReference type="ChEBI" id="CHEBI:30616"/>
        <dbReference type="ChEBI" id="CHEBI:43474"/>
        <dbReference type="ChEBI" id="CHEBI:456216"/>
    </reaction>
</comment>
<comment type="cofactor">
    <cofactor evidence="2">
        <name>Mg(2+)</name>
        <dbReference type="ChEBI" id="CHEBI:18420"/>
    </cofactor>
</comment>
<comment type="subcellular location">
    <subcellularLocation>
        <location evidence="8">Cell membrane</location>
        <topology evidence="4">Multi-pass membrane protein</topology>
    </subcellularLocation>
</comment>
<comment type="developmental stage">
    <text evidence="7">Expressed ubiquitously in sodium-stressed and non-stressed protonemata (PubMed:17556514). Expressed in the stem, basal part of the leaves, and in a small number of rhizoids originating from the base of sodium-stressed and non-stressed gametophytes (PubMed:17556514).</text>
</comment>
<comment type="induction">
    <text evidence="7 8">Induced in presence of sodium ions and high pH, a combination of these conditions has a synergistic effect (PubMed:17556514, PubMed:19757095). It is unclear if potassium ions positively influence the expression level (PubMed:17556514, PubMed:19757095).</text>
</comment>
<comment type="PTM">
    <text evidence="3">The active site is phosphorylated in presence of sodium or potassium and in conditions of higher pH. Not phosphorylated in presence of calcium ions.</text>
</comment>
<comment type="disruption phenotype">
    <text evidence="7 8">Increases accumulation of intracellular sodium in conditions of high sodium ions (PubMed:17556514, PubMed:19757095). Does not affect intracellular potassium levels in presence of high potassium (PubMed:17556514). Leads to sodium ion sensitivity, the sensitivity to potassium ions is not affected (PubMed:17556514).</text>
</comment>
<comment type="similarity">
    <text evidence="11">Belongs to the cation transport ATPase (P-type) (TC 3.A.3) family. Type IID subfamily.</text>
</comment>
<sequence length="967" mass="105167">MEGSGDKRHENLDEDGYNWHAQSVESVSKALGTNPNLGVSDGRSAELLKQHGYNELKGQAGVNPWKILLRQVSNGLTAVLVVAMVVSFAVKDYAEAGVLVIVIAFNTIVGFVQEYRAEKTMDALRKMASPSAKVIRDGSHHRISSRDVVPGDLLTFEVGDVVPADCRLIEVLNLEVDEALLTGEAVPSLKTVQPIGGKDVSIGDRTNMSYSSTTVVKGRGKAIVVSTGMSTEIGKISKAINETKTQSTPMQRKLNLMAYMLLAFALLLALIVFAVNKFNFSTEVVIYAIALSIAIIPEGLIAVITIVQALGVRRMAKQHALVRKLVALESLQAVTNICSDKTGTLTEGKMVVTNVWLPGHESEYIVAGQGYETVGDLSTSAGVAVVRSAALEDVNYRLLVECCALCNTANIVEASEGKVWGDPTEIALQVFAYKMEMGMPILRKHKELVEEFPFSSDTKRMSMVCQTESGNFLEIFTKGSEVVLSICDNVMDRTGDIHSISGDEGFLKLVSTQQEEMAKQGLRVLVLAYGQVSERSIGKPLSKWERNDAEKSLTFLGLVGIRDTPRVESEQSVRNCHRAGITVHMLTGDHKATAMSIAKEVGIIEEPHGSEIANGNEIVPLSASVMTATEFDQLTDEQVDALVDLPLVIARCTPSTKVRMIDALHRRKKFVAMTGDGVNDAPSLKKADVGIAMGAGSDVAKTSSDIVLTDNNFATIVQAIGEGRRIFSNIKKFVLHLLSTNVGQVIVLLIGLAFKDRTGTSVFPLSPVQILFLNLVTGTPPAMALGIEPASSSVMQVPPHVKGLFTVELIMDIFIFGTFIGILALASWVLVIYPFGNSDLATLCNTTANLQECSTIFRARSTVQLSFTWMILFHAYNCRHLRASLLTAEGGGASRFFSNKVLVASVFIGALLPIPTIYIGTLNTEVFKQEGITWEWIIVIVSVFVFFLLSEFYKLLKRRFIKTPYNM</sequence>
<organism evidence="16">
    <name type="scientific">Physcomitrium patens</name>
    <name type="common">Spreading-leaved earth moss</name>
    <name type="synonym">Physcomitrella patens</name>
    <dbReference type="NCBI Taxonomy" id="3218"/>
    <lineage>
        <taxon>Eukaryota</taxon>
        <taxon>Viridiplantae</taxon>
        <taxon>Streptophyta</taxon>
        <taxon>Embryophyta</taxon>
        <taxon>Bryophyta</taxon>
        <taxon>Bryophytina</taxon>
        <taxon>Bryopsida</taxon>
        <taxon>Funariidae</taxon>
        <taxon>Funariales</taxon>
        <taxon>Funariaceae</taxon>
        <taxon>Physcomitrium</taxon>
    </lineage>
</organism>